<feature type="chain" id="PRO_0000424883" description="ECF RNA polymerase sigma-E factor">
    <location>
        <begin position="1"/>
        <end position="191"/>
    </location>
</feature>
<feature type="DNA-binding region" description="H-T-H motif" evidence="1">
    <location>
        <begin position="156"/>
        <end position="175"/>
    </location>
</feature>
<feature type="region of interest" description="Binds RNAP core" evidence="1">
    <location>
        <begin position="1"/>
        <end position="153"/>
    </location>
</feature>
<feature type="region of interest" description="Sigma-70 factor domain-2">
    <location>
        <begin position="25"/>
        <end position="92"/>
    </location>
</feature>
<feature type="region of interest" description="Sigma-70 factor domain-4">
    <location>
        <begin position="129"/>
        <end position="180"/>
    </location>
</feature>
<feature type="short sequence motif" description="Polymerase core binding">
    <location>
        <begin position="48"/>
        <end position="61"/>
    </location>
</feature>
<keyword id="KW-0963">Cytoplasm</keyword>
<keyword id="KW-0238">DNA-binding</keyword>
<keyword id="KW-0731">Sigma factor</keyword>
<keyword id="KW-0346">Stress response</keyword>
<keyword id="KW-0804">Transcription</keyword>
<keyword id="KW-0805">Transcription regulation</keyword>
<keyword id="KW-0843">Virulence</keyword>
<name>RPOE_SALT1</name>
<proteinExistence type="evidence at transcript level"/>
<protein>
    <recommendedName>
        <fullName>ECF RNA polymerase sigma-E factor</fullName>
    </recommendedName>
    <alternativeName>
        <fullName>RNA polymerase sigma-E factor</fullName>
    </alternativeName>
</protein>
<dbReference type="EMBL" id="CP001363">
    <property type="protein sequence ID" value="ACY89663.1"/>
    <property type="molecule type" value="Genomic_DNA"/>
</dbReference>
<dbReference type="RefSeq" id="WP_000003307.1">
    <property type="nucleotide sequence ID" value="NZ_CP043402.1"/>
</dbReference>
<dbReference type="BMRB" id="D0ZSY9"/>
<dbReference type="SMR" id="D0ZSY9"/>
<dbReference type="GeneID" id="92972160"/>
<dbReference type="KEGG" id="seo:STM14_3234"/>
<dbReference type="PATRIC" id="fig|588858.6.peg.3001"/>
<dbReference type="HOGENOM" id="CLU_047691_3_0_6"/>
<dbReference type="BioCyc" id="SENT588858:STM14_RS14455-MONOMER"/>
<dbReference type="Proteomes" id="UP000002695">
    <property type="component" value="Chromosome"/>
</dbReference>
<dbReference type="GO" id="GO:0005737">
    <property type="term" value="C:cytoplasm"/>
    <property type="evidence" value="ECO:0007669"/>
    <property type="project" value="UniProtKB-SubCell"/>
</dbReference>
<dbReference type="GO" id="GO:0003677">
    <property type="term" value="F:DNA binding"/>
    <property type="evidence" value="ECO:0007669"/>
    <property type="project" value="UniProtKB-KW"/>
</dbReference>
<dbReference type="GO" id="GO:0016987">
    <property type="term" value="F:sigma factor activity"/>
    <property type="evidence" value="ECO:0007669"/>
    <property type="project" value="UniProtKB-KW"/>
</dbReference>
<dbReference type="GO" id="GO:0097533">
    <property type="term" value="P:cellular stress response to acid chemical"/>
    <property type="evidence" value="ECO:0000315"/>
    <property type="project" value="UniProtKB"/>
</dbReference>
<dbReference type="GO" id="GO:0006352">
    <property type="term" value="P:DNA-templated transcription initiation"/>
    <property type="evidence" value="ECO:0007669"/>
    <property type="project" value="InterPro"/>
</dbReference>
<dbReference type="GO" id="GO:0009266">
    <property type="term" value="P:response to temperature stimulus"/>
    <property type="evidence" value="ECO:0000270"/>
    <property type="project" value="UniProtKB"/>
</dbReference>
<dbReference type="CDD" id="cd06171">
    <property type="entry name" value="Sigma70_r4"/>
    <property type="match status" value="1"/>
</dbReference>
<dbReference type="FunFam" id="1.10.10.10:FF:000043">
    <property type="entry name" value="RNA polymerase sigma factor"/>
    <property type="match status" value="1"/>
</dbReference>
<dbReference type="FunFam" id="1.10.1740.10:FF:000001">
    <property type="entry name" value="RNA polymerase sigma factor"/>
    <property type="match status" value="1"/>
</dbReference>
<dbReference type="Gene3D" id="1.10.1740.10">
    <property type="match status" value="1"/>
</dbReference>
<dbReference type="Gene3D" id="1.10.10.10">
    <property type="entry name" value="Winged helix-like DNA-binding domain superfamily/Winged helix DNA-binding domain"/>
    <property type="match status" value="1"/>
</dbReference>
<dbReference type="InterPro" id="IPR039425">
    <property type="entry name" value="RNA_pol_sigma-70-like"/>
</dbReference>
<dbReference type="InterPro" id="IPR014284">
    <property type="entry name" value="RNA_pol_sigma-70_dom"/>
</dbReference>
<dbReference type="InterPro" id="IPR000838">
    <property type="entry name" value="RNA_pol_sigma70_ECF_CS"/>
</dbReference>
<dbReference type="InterPro" id="IPR007627">
    <property type="entry name" value="RNA_pol_sigma70_r2"/>
</dbReference>
<dbReference type="InterPro" id="IPR013249">
    <property type="entry name" value="RNA_pol_sigma70_r4_t2"/>
</dbReference>
<dbReference type="InterPro" id="IPR014286">
    <property type="entry name" value="RNA_pol_sigma70_RpoE"/>
</dbReference>
<dbReference type="InterPro" id="IPR013325">
    <property type="entry name" value="RNA_pol_sigma_r2"/>
</dbReference>
<dbReference type="InterPro" id="IPR013324">
    <property type="entry name" value="RNA_pol_sigma_r3/r4-like"/>
</dbReference>
<dbReference type="InterPro" id="IPR036388">
    <property type="entry name" value="WH-like_DNA-bd_sf"/>
</dbReference>
<dbReference type="NCBIfam" id="TIGR02939">
    <property type="entry name" value="RpoE_Sigma70"/>
    <property type="match status" value="1"/>
</dbReference>
<dbReference type="NCBIfam" id="TIGR02937">
    <property type="entry name" value="sigma70-ECF"/>
    <property type="match status" value="1"/>
</dbReference>
<dbReference type="PANTHER" id="PTHR43133:SF53">
    <property type="entry name" value="ECF RNA POLYMERASE SIGMA-E FACTOR"/>
    <property type="match status" value="1"/>
</dbReference>
<dbReference type="PANTHER" id="PTHR43133">
    <property type="entry name" value="RNA POLYMERASE ECF-TYPE SIGMA FACTO"/>
    <property type="match status" value="1"/>
</dbReference>
<dbReference type="Pfam" id="PF04542">
    <property type="entry name" value="Sigma70_r2"/>
    <property type="match status" value="1"/>
</dbReference>
<dbReference type="Pfam" id="PF08281">
    <property type="entry name" value="Sigma70_r4_2"/>
    <property type="match status" value="1"/>
</dbReference>
<dbReference type="SUPFAM" id="SSF88946">
    <property type="entry name" value="Sigma2 domain of RNA polymerase sigma factors"/>
    <property type="match status" value="1"/>
</dbReference>
<dbReference type="SUPFAM" id="SSF88659">
    <property type="entry name" value="Sigma3 and sigma4 domains of RNA polymerase sigma factors"/>
    <property type="match status" value="1"/>
</dbReference>
<dbReference type="PROSITE" id="PS01063">
    <property type="entry name" value="SIGMA70_ECF"/>
    <property type="match status" value="1"/>
</dbReference>
<organism>
    <name type="scientific">Salmonella typhimurium (strain 14028s / SGSC 2262)</name>
    <dbReference type="NCBI Taxonomy" id="588858"/>
    <lineage>
        <taxon>Bacteria</taxon>
        <taxon>Pseudomonadati</taxon>
        <taxon>Pseudomonadota</taxon>
        <taxon>Gammaproteobacteria</taxon>
        <taxon>Enterobacterales</taxon>
        <taxon>Enterobacteriaceae</taxon>
        <taxon>Salmonella</taxon>
    </lineage>
</organism>
<reference key="1">
    <citation type="journal article" date="2010" name="J. Bacteriol.">
        <title>Short-term signatures of evolutionary change in the Salmonella enterica serovar typhimurium 14028 genome.</title>
        <authorList>
            <person name="Jarvik T."/>
            <person name="Smillie C."/>
            <person name="Groisman E.A."/>
            <person name="Ochman H."/>
        </authorList>
    </citation>
    <scope>NUCLEOTIDE SEQUENCE [LARGE SCALE GENOMIC DNA]</scope>
    <source>
        <strain>14028s / SGSC 2262</strain>
    </source>
</reference>
<reference key="2">
    <citation type="journal article" date="2002" name="Mol. Microbiol.">
        <title>The alternative sigma factor sigmaE controls antioxidant defences required for Salmonella virulence and stationary-phase survival.</title>
        <authorList>
            <person name="Testerman T.L."/>
            <person name="Vazquez-Torres A."/>
            <person name="Xu Y."/>
            <person name="Jones-Carson J."/>
            <person name="Libby S.J."/>
            <person name="Fang F.C."/>
        </authorList>
    </citation>
    <scope>INDUCTION</scope>
    <scope>DISRUPTION PHENOTYPE</scope>
    <source>
        <strain>14028s / SGSC 2262</strain>
    </source>
</reference>
<reference key="3">
    <citation type="journal article" date="2009" name="Mol. Microbiol.">
        <title>Acid stress activation of the sigma(E) stress response in Salmonella enterica serovar Typhimurium.</title>
        <authorList>
            <person name="Muller C."/>
            <person name="Bang I.S."/>
            <person name="Velayudhan J."/>
            <person name="Karlinsey J."/>
            <person name="Papenfort K."/>
            <person name="Vogel J."/>
            <person name="Fang F.C."/>
        </authorList>
    </citation>
    <scope>FUNCTION</scope>
    <scope>ACTIVITY REGULATION</scope>
    <scope>INDUCTION</scope>
    <scope>AUTOREGULATION</scope>
    <scope>DISRUPTION PHENOTYPE</scope>
    <source>
        <strain>14028s / SGSC 2262</strain>
    </source>
</reference>
<evidence type="ECO:0000250" key="1"/>
<evidence type="ECO:0000269" key="2">
    <source>
    </source>
</evidence>
<evidence type="ECO:0000269" key="3">
    <source>
    </source>
</evidence>
<evidence type="ECO:0000305" key="4"/>
<comment type="function">
    <text evidence="3">Sigma factors are initiation factors that promote the attachment of RNA polymerase (RNAP) to specific initiation sites and are then released. Extracytoplasmic function (ECF) sigma-E controls the envelope stress response, responding to periplasmic protein stress, increased levels of periplasmic lipopolysaccharide (LPS) as well as acid stress, heat shock and oxidative stress; it controls protein processing in the extracytoplasmic compartment.</text>
</comment>
<comment type="activity regulation">
    <text evidence="3">ECF sigma-E is held in an inactive form by its cognate anti-sigma factor (RseA) until released by regulated intramembrane proteolysis (RIP). RIP occurs when an extracytoplasmic signal (periplasmic, acid or heat stress) triggers a concerted proteolytic cascade to transmit information and elicit cellular responses. In S.typhimurium there are 2 cascades, the heat shock response which depends on DegS and RseP, and acid response which depends only on RseP. The anti-sigma factor RseA is an inner membrane protein, binding sigma-E in the cytoplasm and RseB in the periplasm. RseA is first cut extracytoplasmically (site-1 protease, S1P, by DegS), then within the membrane itself (site-2 protease, S2P, by RseP), while cytoplasmic proteases (predominantly ClpX-ClpP) finish degrading the regulatory protein, liberating sigma-E. Degradation of RseA requires 2 signals to activate DegS; an outer membrane protein (OMP) signal activates DegS, while an LPS signal causes release of RseB from RseA, freeing RseA to be cleaved. OMP stress can be abrogated by overexpression of the sRNA rybB.</text>
</comment>
<comment type="subunit">
    <text evidence="4">Interacts transiently with the RNAP catalytic core formed by RpoA, RpoB, RpoC and RpoZ (2 alpha, 1 beta, 1 beta' and 1 omega subunit) to form the RNAP holoenzyme that can initiate transcription. Interacts 1:1 with anti-sigma-E factor RseA which prevents binding to RNAP catalytic core (Probable).</text>
</comment>
<comment type="subcellular location">
    <subcellularLocation>
        <location evidence="4">Cytoplasm</location>
    </subcellularLocation>
    <text evidence="4">Associates with the inner membrane via RseA.</text>
</comment>
<comment type="induction">
    <text evidence="2 3">Poorly expressed in logarithmic growth, induced in stationary phase. By acid stress (pH 4.5), heat shock. Has 3 promoters, the first 2 are sigma-70-dependent, the third is positively auto-regulated.</text>
</comment>
<comment type="domain">
    <text evidence="1">The sigma-70 factor domain-2 mediates sequence-specific interaction with the -10 element in promoter DNA, and plays an important role in melting the double-stranded DNA and the formation of the transcription bubble. The sigma-70 factor domain-2 mediates interaction with the RNA polymerase subunits RpoB and RpoC (By similarity).</text>
</comment>
<comment type="domain">
    <text evidence="1">The sigma-70 factor domain-4 contains a helix-turn-helix (H-T-H) motif that mediates interaction with the -35 element in promoter DNA. The domain also mediates interaction with the RNA polymerase subunit RpoA. Interactions between sigma-70 factor domain-4 and anti-sigma factors prevents interaction of sigma factors with the RNA polymerase catalytic core (By similarity).</text>
</comment>
<comment type="disruption phenotype">
    <text evidence="2 3">Not essential. Increased sensitivity to oxidative stress. 100-fold decreased survival in acidified murine macrophages, slightly reduced growth at pH 7.0, delayed growth at pH 4.5, severely delayed growth at pH 3.0. Loss of sigma-E-dependent acid tolerance response, loss of acid and heat stress response.</text>
</comment>
<comment type="similarity">
    <text evidence="4">Belongs to the sigma-70 factor family. ECF subfamily.</text>
</comment>
<accession>D0ZSY9</accession>
<gene>
    <name type="primary">rpoE</name>
    <name type="synonym">sigE</name>
    <name type="ordered locus">STM14_3234</name>
</gene>
<sequence>MSEQLTDQVLVERVQKGDQKAFNLLVVRYQHKVASLVSRYVPSGDVPDVVQESFIKAYRALDSFRGDSAFYTWLYRIAVNTAKNYLVAQGRRPPSSDVDAIEAENFESGGALKEISNPENLMLSEELRQIVFRTIESLPEDLRMAITLRELDGLSYEEIAAIMDCPVGTVRSRIFRAREAIDNKVQPLIRR</sequence>